<sequence length="156" mass="16995">MRSSAKQEELVKAFKALLKEEKFSSQGEIVAALQEQGFDNINQSKVSRMLTKFGAVRTRNAKMEMVYCLPAELGVPTTSSPLKNLVLDIDYNDAVVVIHTSPGAAQLIARLLDSLGKAEGILGTIAGDDTIFTTPANGFTVKDLYEAILELFDQEL</sequence>
<feature type="chain" id="PRO_1000097889" description="Arginine repressor">
    <location>
        <begin position="1"/>
        <end position="156"/>
    </location>
</feature>
<proteinExistence type="inferred from homology"/>
<name>ARGR_SHIB3</name>
<reference key="1">
    <citation type="submission" date="2008-05" db="EMBL/GenBank/DDBJ databases">
        <title>Complete sequence of Shigella boydii serotype 18 strain BS512.</title>
        <authorList>
            <person name="Rasko D.A."/>
            <person name="Rosovitz M."/>
            <person name="Maurelli A.T."/>
            <person name="Myers G."/>
            <person name="Seshadri R."/>
            <person name="Cer R."/>
            <person name="Jiang L."/>
            <person name="Ravel J."/>
            <person name="Sebastian Y."/>
        </authorList>
    </citation>
    <scope>NUCLEOTIDE SEQUENCE [LARGE SCALE GENOMIC DNA]</scope>
    <source>
        <strain>CDC 3083-94 / BS512</strain>
    </source>
</reference>
<protein>
    <recommendedName>
        <fullName evidence="1">Arginine repressor</fullName>
    </recommendedName>
</protein>
<keyword id="KW-0028">Amino-acid biosynthesis</keyword>
<keyword id="KW-0055">Arginine biosynthesis</keyword>
<keyword id="KW-0963">Cytoplasm</keyword>
<keyword id="KW-0238">DNA-binding</keyword>
<keyword id="KW-1185">Reference proteome</keyword>
<keyword id="KW-0678">Repressor</keyword>
<keyword id="KW-0804">Transcription</keyword>
<keyword id="KW-0805">Transcription regulation</keyword>
<accession>B2U1U8</accession>
<organism>
    <name type="scientific">Shigella boydii serotype 18 (strain CDC 3083-94 / BS512)</name>
    <dbReference type="NCBI Taxonomy" id="344609"/>
    <lineage>
        <taxon>Bacteria</taxon>
        <taxon>Pseudomonadati</taxon>
        <taxon>Pseudomonadota</taxon>
        <taxon>Gammaproteobacteria</taxon>
        <taxon>Enterobacterales</taxon>
        <taxon>Enterobacteriaceae</taxon>
        <taxon>Shigella</taxon>
    </lineage>
</organism>
<dbReference type="EMBL" id="CP001063">
    <property type="protein sequence ID" value="ACD09928.1"/>
    <property type="molecule type" value="Genomic_DNA"/>
</dbReference>
<dbReference type="RefSeq" id="WP_001257846.1">
    <property type="nucleotide sequence ID" value="NC_010658.1"/>
</dbReference>
<dbReference type="SMR" id="B2U1U8"/>
<dbReference type="STRING" id="344609.SbBS512_E3539"/>
<dbReference type="GeneID" id="93778748"/>
<dbReference type="KEGG" id="sbc:SbBS512_E3539"/>
<dbReference type="HOGENOM" id="CLU_097103_2_0_6"/>
<dbReference type="UniPathway" id="UPA00068"/>
<dbReference type="Proteomes" id="UP000001030">
    <property type="component" value="Chromosome"/>
</dbReference>
<dbReference type="GO" id="GO:0005737">
    <property type="term" value="C:cytoplasm"/>
    <property type="evidence" value="ECO:0007669"/>
    <property type="project" value="UniProtKB-SubCell"/>
</dbReference>
<dbReference type="GO" id="GO:0034618">
    <property type="term" value="F:arginine binding"/>
    <property type="evidence" value="ECO:0007669"/>
    <property type="project" value="InterPro"/>
</dbReference>
<dbReference type="GO" id="GO:0003677">
    <property type="term" value="F:DNA binding"/>
    <property type="evidence" value="ECO:0007669"/>
    <property type="project" value="UniProtKB-KW"/>
</dbReference>
<dbReference type="GO" id="GO:0003700">
    <property type="term" value="F:DNA-binding transcription factor activity"/>
    <property type="evidence" value="ECO:0007669"/>
    <property type="project" value="UniProtKB-UniRule"/>
</dbReference>
<dbReference type="GO" id="GO:0006526">
    <property type="term" value="P:L-arginine biosynthetic process"/>
    <property type="evidence" value="ECO:0007669"/>
    <property type="project" value="UniProtKB-UniPathway"/>
</dbReference>
<dbReference type="GO" id="GO:0051259">
    <property type="term" value="P:protein complex oligomerization"/>
    <property type="evidence" value="ECO:0007669"/>
    <property type="project" value="InterPro"/>
</dbReference>
<dbReference type="GO" id="GO:1900079">
    <property type="term" value="P:regulation of arginine biosynthetic process"/>
    <property type="evidence" value="ECO:0007669"/>
    <property type="project" value="UniProtKB-UniRule"/>
</dbReference>
<dbReference type="FunFam" id="1.10.10.10:FF:000074">
    <property type="entry name" value="Arginine repressor"/>
    <property type="match status" value="1"/>
</dbReference>
<dbReference type="FunFam" id="3.30.1360.40:FF:000004">
    <property type="entry name" value="Arginine repressor"/>
    <property type="match status" value="1"/>
</dbReference>
<dbReference type="Gene3D" id="3.30.1360.40">
    <property type="match status" value="1"/>
</dbReference>
<dbReference type="Gene3D" id="1.10.10.10">
    <property type="entry name" value="Winged helix-like DNA-binding domain superfamily/Winged helix DNA-binding domain"/>
    <property type="match status" value="1"/>
</dbReference>
<dbReference type="HAMAP" id="MF_00173">
    <property type="entry name" value="Arg_repressor"/>
    <property type="match status" value="1"/>
</dbReference>
<dbReference type="InterPro" id="IPR001669">
    <property type="entry name" value="Arg_repress"/>
</dbReference>
<dbReference type="InterPro" id="IPR020899">
    <property type="entry name" value="Arg_repress_C"/>
</dbReference>
<dbReference type="InterPro" id="IPR036251">
    <property type="entry name" value="Arg_repress_C_sf"/>
</dbReference>
<dbReference type="InterPro" id="IPR020900">
    <property type="entry name" value="Arg_repress_DNA-bd"/>
</dbReference>
<dbReference type="InterPro" id="IPR036388">
    <property type="entry name" value="WH-like_DNA-bd_sf"/>
</dbReference>
<dbReference type="InterPro" id="IPR036390">
    <property type="entry name" value="WH_DNA-bd_sf"/>
</dbReference>
<dbReference type="NCBIfam" id="TIGR01529">
    <property type="entry name" value="argR_whole"/>
    <property type="match status" value="1"/>
</dbReference>
<dbReference type="NCBIfam" id="NF003457">
    <property type="entry name" value="PRK05066.1"/>
    <property type="match status" value="1"/>
</dbReference>
<dbReference type="PANTHER" id="PTHR34471">
    <property type="entry name" value="ARGININE REPRESSOR"/>
    <property type="match status" value="1"/>
</dbReference>
<dbReference type="PANTHER" id="PTHR34471:SF1">
    <property type="entry name" value="ARGININE REPRESSOR"/>
    <property type="match status" value="1"/>
</dbReference>
<dbReference type="Pfam" id="PF01316">
    <property type="entry name" value="Arg_repressor"/>
    <property type="match status" value="1"/>
</dbReference>
<dbReference type="Pfam" id="PF02863">
    <property type="entry name" value="Arg_repressor_C"/>
    <property type="match status" value="1"/>
</dbReference>
<dbReference type="PRINTS" id="PR01467">
    <property type="entry name" value="ARGREPRESSOR"/>
</dbReference>
<dbReference type="SUPFAM" id="SSF55252">
    <property type="entry name" value="C-terminal domain of arginine repressor"/>
    <property type="match status" value="1"/>
</dbReference>
<dbReference type="SUPFAM" id="SSF46785">
    <property type="entry name" value="Winged helix' DNA-binding domain"/>
    <property type="match status" value="1"/>
</dbReference>
<gene>
    <name evidence="1" type="primary">argR</name>
    <name type="ordered locus">SbBS512_E3539</name>
</gene>
<evidence type="ECO:0000255" key="1">
    <source>
        <dbReference type="HAMAP-Rule" id="MF_00173"/>
    </source>
</evidence>
<comment type="function">
    <text evidence="1">Regulates arginine biosynthesis genes.</text>
</comment>
<comment type="pathway">
    <text>Amino-acid biosynthesis; L-arginine biosynthesis [regulation].</text>
</comment>
<comment type="subcellular location">
    <subcellularLocation>
        <location evidence="1">Cytoplasm</location>
    </subcellularLocation>
</comment>
<comment type="similarity">
    <text evidence="1">Belongs to the ArgR family.</text>
</comment>